<gene>
    <name evidence="1" type="primary">rplX</name>
    <name type="ordered locus">PG_1927</name>
</gene>
<sequence length="106" mass="11602">MSKLHIKKGDTVMVISGEDKGHSGRVLEVLVKEQRAIVEGLNMIKKHAKPSAKNPQGGIISKEAPIHISNLNVVDPKTGKATRIGRRLNENGKLVRYAKKSGEEIK</sequence>
<feature type="chain" id="PRO_0000130692" description="Large ribosomal subunit protein uL24">
    <location>
        <begin position="1"/>
        <end position="106"/>
    </location>
</feature>
<organism>
    <name type="scientific">Porphyromonas gingivalis (strain ATCC BAA-308 / W83)</name>
    <dbReference type="NCBI Taxonomy" id="242619"/>
    <lineage>
        <taxon>Bacteria</taxon>
        <taxon>Pseudomonadati</taxon>
        <taxon>Bacteroidota</taxon>
        <taxon>Bacteroidia</taxon>
        <taxon>Bacteroidales</taxon>
        <taxon>Porphyromonadaceae</taxon>
        <taxon>Porphyromonas</taxon>
    </lineage>
</organism>
<proteinExistence type="inferred from homology"/>
<keyword id="KW-1185">Reference proteome</keyword>
<keyword id="KW-0687">Ribonucleoprotein</keyword>
<keyword id="KW-0689">Ribosomal protein</keyword>
<keyword id="KW-0694">RNA-binding</keyword>
<keyword id="KW-0699">rRNA-binding</keyword>
<comment type="function">
    <text evidence="1">One of two assembly initiator proteins, it binds directly to the 5'-end of the 23S rRNA, where it nucleates assembly of the 50S subunit.</text>
</comment>
<comment type="function">
    <text evidence="1">One of the proteins that surrounds the polypeptide exit tunnel on the outside of the subunit.</text>
</comment>
<comment type="subunit">
    <text evidence="1">Part of the 50S ribosomal subunit.</text>
</comment>
<comment type="similarity">
    <text evidence="1">Belongs to the universal ribosomal protein uL24 family.</text>
</comment>
<reference key="1">
    <citation type="journal article" date="2003" name="J. Bacteriol.">
        <title>Complete genome sequence of the oral pathogenic bacterium Porphyromonas gingivalis strain W83.</title>
        <authorList>
            <person name="Nelson K.E."/>
            <person name="Fleischmann R.D."/>
            <person name="DeBoy R.T."/>
            <person name="Paulsen I.T."/>
            <person name="Fouts D.E."/>
            <person name="Eisen J.A."/>
            <person name="Daugherty S.C."/>
            <person name="Dodson R.J."/>
            <person name="Durkin A.S."/>
            <person name="Gwinn M.L."/>
            <person name="Haft D.H."/>
            <person name="Kolonay J.F."/>
            <person name="Nelson W.C."/>
            <person name="Mason T.M."/>
            <person name="Tallon L."/>
            <person name="Gray J."/>
            <person name="Granger D."/>
            <person name="Tettelin H."/>
            <person name="Dong H."/>
            <person name="Galvin J.L."/>
            <person name="Duncan M.J."/>
            <person name="Dewhirst F.E."/>
            <person name="Fraser C.M."/>
        </authorList>
    </citation>
    <scope>NUCLEOTIDE SEQUENCE [LARGE SCALE GENOMIC DNA]</scope>
    <source>
        <strain>ATCC BAA-308 / W83</strain>
    </source>
</reference>
<evidence type="ECO:0000255" key="1">
    <source>
        <dbReference type="HAMAP-Rule" id="MF_01326"/>
    </source>
</evidence>
<evidence type="ECO:0000305" key="2"/>
<name>RL24_PORGI</name>
<accession>Q7MTM4</accession>
<dbReference type="EMBL" id="AE015924">
    <property type="protein sequence ID" value="AAQ66908.1"/>
    <property type="molecule type" value="Genomic_DNA"/>
</dbReference>
<dbReference type="RefSeq" id="WP_004583587.1">
    <property type="nucleotide sequence ID" value="NC_002950.2"/>
</dbReference>
<dbReference type="SMR" id="Q7MTM4"/>
<dbReference type="STRING" id="242619.PG_1927"/>
<dbReference type="EnsemblBacteria" id="AAQ66908">
    <property type="protein sequence ID" value="AAQ66908"/>
    <property type="gene ID" value="PG_1927"/>
</dbReference>
<dbReference type="GeneID" id="29257008"/>
<dbReference type="GeneID" id="57239585"/>
<dbReference type="KEGG" id="pgi:PG_1927"/>
<dbReference type="eggNOG" id="COG0198">
    <property type="taxonomic scope" value="Bacteria"/>
</dbReference>
<dbReference type="HOGENOM" id="CLU_093315_2_0_10"/>
<dbReference type="Proteomes" id="UP000000588">
    <property type="component" value="Chromosome"/>
</dbReference>
<dbReference type="GO" id="GO:1990904">
    <property type="term" value="C:ribonucleoprotein complex"/>
    <property type="evidence" value="ECO:0007669"/>
    <property type="project" value="UniProtKB-KW"/>
</dbReference>
<dbReference type="GO" id="GO:0005840">
    <property type="term" value="C:ribosome"/>
    <property type="evidence" value="ECO:0007669"/>
    <property type="project" value="UniProtKB-KW"/>
</dbReference>
<dbReference type="GO" id="GO:0019843">
    <property type="term" value="F:rRNA binding"/>
    <property type="evidence" value="ECO:0007669"/>
    <property type="project" value="UniProtKB-UniRule"/>
</dbReference>
<dbReference type="GO" id="GO:0003735">
    <property type="term" value="F:structural constituent of ribosome"/>
    <property type="evidence" value="ECO:0007669"/>
    <property type="project" value="InterPro"/>
</dbReference>
<dbReference type="GO" id="GO:0006412">
    <property type="term" value="P:translation"/>
    <property type="evidence" value="ECO:0007669"/>
    <property type="project" value="UniProtKB-UniRule"/>
</dbReference>
<dbReference type="CDD" id="cd06089">
    <property type="entry name" value="KOW_RPL26"/>
    <property type="match status" value="1"/>
</dbReference>
<dbReference type="FunFam" id="2.30.30.30:FF:000004">
    <property type="entry name" value="50S ribosomal protein L24"/>
    <property type="match status" value="1"/>
</dbReference>
<dbReference type="Gene3D" id="2.30.30.30">
    <property type="match status" value="1"/>
</dbReference>
<dbReference type="HAMAP" id="MF_01326_B">
    <property type="entry name" value="Ribosomal_uL24_B"/>
    <property type="match status" value="1"/>
</dbReference>
<dbReference type="InterPro" id="IPR005824">
    <property type="entry name" value="KOW"/>
</dbReference>
<dbReference type="InterPro" id="IPR014722">
    <property type="entry name" value="Rib_uL2_dom2"/>
</dbReference>
<dbReference type="InterPro" id="IPR003256">
    <property type="entry name" value="Ribosomal_uL24"/>
</dbReference>
<dbReference type="InterPro" id="IPR005825">
    <property type="entry name" value="Ribosomal_uL24_CS"/>
</dbReference>
<dbReference type="InterPro" id="IPR041988">
    <property type="entry name" value="Ribosomal_uL24_KOW"/>
</dbReference>
<dbReference type="InterPro" id="IPR008991">
    <property type="entry name" value="Translation_prot_SH3-like_sf"/>
</dbReference>
<dbReference type="NCBIfam" id="TIGR01079">
    <property type="entry name" value="rplX_bact"/>
    <property type="match status" value="1"/>
</dbReference>
<dbReference type="PANTHER" id="PTHR12903">
    <property type="entry name" value="MITOCHONDRIAL RIBOSOMAL PROTEIN L24"/>
    <property type="match status" value="1"/>
</dbReference>
<dbReference type="Pfam" id="PF00467">
    <property type="entry name" value="KOW"/>
    <property type="match status" value="1"/>
</dbReference>
<dbReference type="Pfam" id="PF17136">
    <property type="entry name" value="ribosomal_L24"/>
    <property type="match status" value="1"/>
</dbReference>
<dbReference type="SMART" id="SM00739">
    <property type="entry name" value="KOW"/>
    <property type="match status" value="1"/>
</dbReference>
<dbReference type="SUPFAM" id="SSF50104">
    <property type="entry name" value="Translation proteins SH3-like domain"/>
    <property type="match status" value="1"/>
</dbReference>
<dbReference type="PROSITE" id="PS01108">
    <property type="entry name" value="RIBOSOMAL_L24"/>
    <property type="match status" value="1"/>
</dbReference>
<protein>
    <recommendedName>
        <fullName evidence="1">Large ribosomal subunit protein uL24</fullName>
    </recommendedName>
    <alternativeName>
        <fullName evidence="2">50S ribosomal protein L24</fullName>
    </alternativeName>
</protein>